<accession>A7GX43</accession>
<evidence type="ECO:0000255" key="1">
    <source>
        <dbReference type="HAMAP-Rule" id="MF_00122"/>
    </source>
</evidence>
<organism>
    <name type="scientific">Campylobacter curvus (strain 525.92)</name>
    <dbReference type="NCBI Taxonomy" id="360105"/>
    <lineage>
        <taxon>Bacteria</taxon>
        <taxon>Pseudomonadati</taxon>
        <taxon>Campylobacterota</taxon>
        <taxon>Epsilonproteobacteria</taxon>
        <taxon>Campylobacterales</taxon>
        <taxon>Campylobacteraceae</taxon>
        <taxon>Campylobacter</taxon>
    </lineage>
</organism>
<protein>
    <recommendedName>
        <fullName evidence="1">Aspartyl/glutamyl-tRNA(Asn/Gln) amidotransferase subunit C</fullName>
        <shortName evidence="1">Asp/Glu-ADT subunit C</shortName>
        <ecNumber evidence="1">6.3.5.-</ecNumber>
    </recommendedName>
</protein>
<keyword id="KW-0067">ATP-binding</keyword>
<keyword id="KW-0436">Ligase</keyword>
<keyword id="KW-0547">Nucleotide-binding</keyword>
<keyword id="KW-0648">Protein biosynthesis</keyword>
<keyword id="KW-1185">Reference proteome</keyword>
<feature type="chain" id="PRO_1000016098" description="Aspartyl/glutamyl-tRNA(Asn/Gln) amidotransferase subunit C">
    <location>
        <begin position="1"/>
        <end position="95"/>
    </location>
</feature>
<dbReference type="EC" id="6.3.5.-" evidence="1"/>
<dbReference type="EMBL" id="CP000767">
    <property type="protein sequence ID" value="EAT99858.1"/>
    <property type="molecule type" value="Genomic_DNA"/>
</dbReference>
<dbReference type="RefSeq" id="WP_009650004.1">
    <property type="nucleotide sequence ID" value="NC_009715.2"/>
</dbReference>
<dbReference type="SMR" id="A7GX43"/>
<dbReference type="STRING" id="360105.CCV52592_0997"/>
<dbReference type="KEGG" id="ccv:CCV52592_0997"/>
<dbReference type="HOGENOM" id="CLU_105899_2_1_7"/>
<dbReference type="OrthoDB" id="9813938at2"/>
<dbReference type="Proteomes" id="UP000006380">
    <property type="component" value="Chromosome"/>
</dbReference>
<dbReference type="GO" id="GO:0050566">
    <property type="term" value="F:asparaginyl-tRNA synthase (glutamine-hydrolyzing) activity"/>
    <property type="evidence" value="ECO:0007669"/>
    <property type="project" value="RHEA"/>
</dbReference>
<dbReference type="GO" id="GO:0005524">
    <property type="term" value="F:ATP binding"/>
    <property type="evidence" value="ECO:0007669"/>
    <property type="project" value="UniProtKB-KW"/>
</dbReference>
<dbReference type="GO" id="GO:0050567">
    <property type="term" value="F:glutaminyl-tRNA synthase (glutamine-hydrolyzing) activity"/>
    <property type="evidence" value="ECO:0007669"/>
    <property type="project" value="UniProtKB-UniRule"/>
</dbReference>
<dbReference type="GO" id="GO:0070681">
    <property type="term" value="P:glutaminyl-tRNAGln biosynthesis via transamidation"/>
    <property type="evidence" value="ECO:0007669"/>
    <property type="project" value="TreeGrafter"/>
</dbReference>
<dbReference type="GO" id="GO:0006450">
    <property type="term" value="P:regulation of translational fidelity"/>
    <property type="evidence" value="ECO:0007669"/>
    <property type="project" value="InterPro"/>
</dbReference>
<dbReference type="GO" id="GO:0006412">
    <property type="term" value="P:translation"/>
    <property type="evidence" value="ECO:0007669"/>
    <property type="project" value="UniProtKB-UniRule"/>
</dbReference>
<dbReference type="Gene3D" id="1.10.20.60">
    <property type="entry name" value="Glu-tRNAGln amidotransferase C subunit, N-terminal domain"/>
    <property type="match status" value="1"/>
</dbReference>
<dbReference type="HAMAP" id="MF_00122">
    <property type="entry name" value="GatC"/>
    <property type="match status" value="1"/>
</dbReference>
<dbReference type="InterPro" id="IPR036113">
    <property type="entry name" value="Asp/Glu-ADT_sf_sub_c"/>
</dbReference>
<dbReference type="InterPro" id="IPR003837">
    <property type="entry name" value="GatC"/>
</dbReference>
<dbReference type="NCBIfam" id="TIGR00135">
    <property type="entry name" value="gatC"/>
    <property type="match status" value="1"/>
</dbReference>
<dbReference type="PANTHER" id="PTHR15004">
    <property type="entry name" value="GLUTAMYL-TRNA(GLN) AMIDOTRANSFERASE SUBUNIT C, MITOCHONDRIAL"/>
    <property type="match status" value="1"/>
</dbReference>
<dbReference type="PANTHER" id="PTHR15004:SF0">
    <property type="entry name" value="GLUTAMYL-TRNA(GLN) AMIDOTRANSFERASE SUBUNIT C, MITOCHONDRIAL"/>
    <property type="match status" value="1"/>
</dbReference>
<dbReference type="Pfam" id="PF02686">
    <property type="entry name" value="GatC"/>
    <property type="match status" value="1"/>
</dbReference>
<dbReference type="SUPFAM" id="SSF141000">
    <property type="entry name" value="Glu-tRNAGln amidotransferase C subunit"/>
    <property type="match status" value="1"/>
</dbReference>
<proteinExistence type="inferred from homology"/>
<sequence length="95" mass="10521">MQIDDALLSKLEKLSSLKINDDKREEIKRQLSEIVSFVDVLNELDLKGSEAVVSSIKGGTLLREDSPIASDVIDIILKNAPSQEGHFFSVPKIIE</sequence>
<reference key="1">
    <citation type="submission" date="2007-07" db="EMBL/GenBank/DDBJ databases">
        <title>Genome sequence of Campylobacter curvus 525.92 isolated from human feces.</title>
        <authorList>
            <person name="Fouts D.E."/>
            <person name="Mongodin E.F."/>
            <person name="Puiu D."/>
            <person name="Sebastian Y."/>
            <person name="Miller W.G."/>
            <person name="Mandrell R.E."/>
            <person name="Lastovica A.J."/>
            <person name="Nelson K.E."/>
        </authorList>
    </citation>
    <scope>NUCLEOTIDE SEQUENCE [LARGE SCALE GENOMIC DNA]</scope>
    <source>
        <strain>525.92</strain>
    </source>
</reference>
<comment type="function">
    <text evidence="1">Allows the formation of correctly charged Asn-tRNA(Asn) or Gln-tRNA(Gln) through the transamidation of misacylated Asp-tRNA(Asn) or Glu-tRNA(Gln) in organisms which lack either or both of asparaginyl-tRNA or glutaminyl-tRNA synthetases. The reaction takes place in the presence of glutamine and ATP through an activated phospho-Asp-tRNA(Asn) or phospho-Glu-tRNA(Gln).</text>
</comment>
<comment type="catalytic activity">
    <reaction evidence="1">
        <text>L-glutamyl-tRNA(Gln) + L-glutamine + ATP + H2O = L-glutaminyl-tRNA(Gln) + L-glutamate + ADP + phosphate + H(+)</text>
        <dbReference type="Rhea" id="RHEA:17521"/>
        <dbReference type="Rhea" id="RHEA-COMP:9681"/>
        <dbReference type="Rhea" id="RHEA-COMP:9684"/>
        <dbReference type="ChEBI" id="CHEBI:15377"/>
        <dbReference type="ChEBI" id="CHEBI:15378"/>
        <dbReference type="ChEBI" id="CHEBI:29985"/>
        <dbReference type="ChEBI" id="CHEBI:30616"/>
        <dbReference type="ChEBI" id="CHEBI:43474"/>
        <dbReference type="ChEBI" id="CHEBI:58359"/>
        <dbReference type="ChEBI" id="CHEBI:78520"/>
        <dbReference type="ChEBI" id="CHEBI:78521"/>
        <dbReference type="ChEBI" id="CHEBI:456216"/>
    </reaction>
</comment>
<comment type="catalytic activity">
    <reaction evidence="1">
        <text>L-aspartyl-tRNA(Asn) + L-glutamine + ATP + H2O = L-asparaginyl-tRNA(Asn) + L-glutamate + ADP + phosphate + 2 H(+)</text>
        <dbReference type="Rhea" id="RHEA:14513"/>
        <dbReference type="Rhea" id="RHEA-COMP:9674"/>
        <dbReference type="Rhea" id="RHEA-COMP:9677"/>
        <dbReference type="ChEBI" id="CHEBI:15377"/>
        <dbReference type="ChEBI" id="CHEBI:15378"/>
        <dbReference type="ChEBI" id="CHEBI:29985"/>
        <dbReference type="ChEBI" id="CHEBI:30616"/>
        <dbReference type="ChEBI" id="CHEBI:43474"/>
        <dbReference type="ChEBI" id="CHEBI:58359"/>
        <dbReference type="ChEBI" id="CHEBI:78515"/>
        <dbReference type="ChEBI" id="CHEBI:78516"/>
        <dbReference type="ChEBI" id="CHEBI:456216"/>
    </reaction>
</comment>
<comment type="subunit">
    <text evidence="1">Heterotrimer of A, B and C subunits.</text>
</comment>
<comment type="similarity">
    <text evidence="1">Belongs to the GatC family.</text>
</comment>
<name>GATC_CAMC5</name>
<gene>
    <name evidence="1" type="primary">gatC</name>
    <name type="ordered locus">Ccur92_04810</name>
    <name type="ORF">CCV52592_0997</name>
</gene>